<comment type="function">
    <text evidence="1">Catalyzes the condensation reaction of fatty acid synthesis by the addition to an acyl acceptor of two carbons from malonyl-ACP. Catalyzes the first condensation reaction which initiates fatty acid synthesis and may therefore play a role in governing the total rate of fatty acid production. Possesses both acetoacetyl-ACP synthase and acetyl transacylase activities. Its substrate specificity determines the biosynthesis of branched-chain and/or straight-chain of fatty acids.</text>
</comment>
<comment type="catalytic activity">
    <reaction evidence="1">
        <text>malonyl-[ACP] + acetyl-CoA + H(+) = 3-oxobutanoyl-[ACP] + CO2 + CoA</text>
        <dbReference type="Rhea" id="RHEA:12080"/>
        <dbReference type="Rhea" id="RHEA-COMP:9623"/>
        <dbReference type="Rhea" id="RHEA-COMP:9625"/>
        <dbReference type="ChEBI" id="CHEBI:15378"/>
        <dbReference type="ChEBI" id="CHEBI:16526"/>
        <dbReference type="ChEBI" id="CHEBI:57287"/>
        <dbReference type="ChEBI" id="CHEBI:57288"/>
        <dbReference type="ChEBI" id="CHEBI:78449"/>
        <dbReference type="ChEBI" id="CHEBI:78450"/>
        <dbReference type="EC" id="2.3.1.180"/>
    </reaction>
</comment>
<comment type="pathway">
    <text evidence="1">Lipid metabolism; fatty acid biosynthesis.</text>
</comment>
<comment type="subunit">
    <text evidence="1">Homodimer.</text>
</comment>
<comment type="subcellular location">
    <subcellularLocation>
        <location evidence="1">Cytoplasm</location>
    </subcellularLocation>
</comment>
<comment type="domain">
    <text evidence="1">The last Arg residue of the ACP-binding site is essential for the weak association between ACP/AcpP and FabH.</text>
</comment>
<comment type="similarity">
    <text evidence="1">Belongs to the thiolase-like superfamily. FabH family.</text>
</comment>
<accession>A2RCX0</accession>
<evidence type="ECO:0000255" key="1">
    <source>
        <dbReference type="HAMAP-Rule" id="MF_01815"/>
    </source>
</evidence>
<feature type="chain" id="PRO_1000056424" description="Beta-ketoacyl-[acyl-carrier-protein] synthase III">
    <location>
        <begin position="1"/>
        <end position="324"/>
    </location>
</feature>
<feature type="region of interest" description="ACP-binding" evidence="1">
    <location>
        <begin position="250"/>
        <end position="254"/>
    </location>
</feature>
<feature type="active site" evidence="1">
    <location>
        <position position="112"/>
    </location>
</feature>
<feature type="active site" evidence="1">
    <location>
        <position position="249"/>
    </location>
</feature>
<feature type="active site" evidence="1">
    <location>
        <position position="279"/>
    </location>
</feature>
<proteinExistence type="inferred from homology"/>
<organism>
    <name type="scientific">Streptococcus pyogenes serotype M5 (strain Manfredo)</name>
    <dbReference type="NCBI Taxonomy" id="160491"/>
    <lineage>
        <taxon>Bacteria</taxon>
        <taxon>Bacillati</taxon>
        <taxon>Bacillota</taxon>
        <taxon>Bacilli</taxon>
        <taxon>Lactobacillales</taxon>
        <taxon>Streptococcaceae</taxon>
        <taxon>Streptococcus</taxon>
    </lineage>
</organism>
<reference key="1">
    <citation type="journal article" date="2007" name="J. Bacteriol.">
        <title>Complete genome of acute rheumatic fever-associated serotype M5 Streptococcus pyogenes strain Manfredo.</title>
        <authorList>
            <person name="Holden M.T.G."/>
            <person name="Scott A."/>
            <person name="Cherevach I."/>
            <person name="Chillingworth T."/>
            <person name="Churcher C."/>
            <person name="Cronin A."/>
            <person name="Dowd L."/>
            <person name="Feltwell T."/>
            <person name="Hamlin N."/>
            <person name="Holroyd S."/>
            <person name="Jagels K."/>
            <person name="Moule S."/>
            <person name="Mungall K."/>
            <person name="Quail M.A."/>
            <person name="Price C."/>
            <person name="Rabbinowitsch E."/>
            <person name="Sharp S."/>
            <person name="Skelton J."/>
            <person name="Whitehead S."/>
            <person name="Barrell B.G."/>
            <person name="Kehoe M."/>
            <person name="Parkhill J."/>
        </authorList>
    </citation>
    <scope>NUCLEOTIDE SEQUENCE [LARGE SCALE GENOMIC DNA]</scope>
    <source>
        <strain>Manfredo</strain>
    </source>
</reference>
<name>FABH_STRPG</name>
<keyword id="KW-0012">Acyltransferase</keyword>
<keyword id="KW-0963">Cytoplasm</keyword>
<keyword id="KW-0275">Fatty acid biosynthesis</keyword>
<keyword id="KW-0276">Fatty acid metabolism</keyword>
<keyword id="KW-0444">Lipid biosynthesis</keyword>
<keyword id="KW-0443">Lipid metabolism</keyword>
<keyword id="KW-0511">Multifunctional enzyme</keyword>
<keyword id="KW-0808">Transferase</keyword>
<sequence length="324" mass="34876">MIFSKISQVAHYVPQQLVTNNDLASIMDTSHEWIFSRTGIAERHISRDEMTSDLAIQVADQLLTQSGLKADAIDFIIVATISPDATMPSTAAKVQAAIAATSAFAFDMTAACSGFVFALAMADKLIASGAYQNGMVIGAETLSKLVNWQDRATAVLFGDGAGGVLLEASKDKHVLAETLHTDGARCQSLISGETSLSSPYSIGKKAIATIQMDGRAIFDFAIRDVSKSILTLMAQSDITKDDIDYCLLHQANRRILDKIARKIDVPREKFLENMMRYGNTSAASIPILLSEAVQKGQIRLDGTQKILLSGFGGGLTWGSLIVRI</sequence>
<dbReference type="EC" id="2.3.1.180" evidence="1"/>
<dbReference type="EMBL" id="AM295007">
    <property type="protein sequence ID" value="CAM29693.1"/>
    <property type="molecule type" value="Genomic_DNA"/>
</dbReference>
<dbReference type="RefSeq" id="WP_010922596.1">
    <property type="nucleotide sequence ID" value="NC_009332.1"/>
</dbReference>
<dbReference type="SMR" id="A2RCX0"/>
<dbReference type="KEGG" id="spf:SpyM50351"/>
<dbReference type="HOGENOM" id="CLU_039592_4_1_9"/>
<dbReference type="UniPathway" id="UPA00094"/>
<dbReference type="GO" id="GO:0005737">
    <property type="term" value="C:cytoplasm"/>
    <property type="evidence" value="ECO:0007669"/>
    <property type="project" value="UniProtKB-SubCell"/>
</dbReference>
<dbReference type="GO" id="GO:0004315">
    <property type="term" value="F:3-oxoacyl-[acyl-carrier-protein] synthase activity"/>
    <property type="evidence" value="ECO:0007669"/>
    <property type="project" value="InterPro"/>
</dbReference>
<dbReference type="GO" id="GO:0033818">
    <property type="term" value="F:beta-ketoacyl-acyl-carrier-protein synthase III activity"/>
    <property type="evidence" value="ECO:0007669"/>
    <property type="project" value="UniProtKB-UniRule"/>
</dbReference>
<dbReference type="GO" id="GO:0006633">
    <property type="term" value="P:fatty acid biosynthetic process"/>
    <property type="evidence" value="ECO:0007669"/>
    <property type="project" value="UniProtKB-UniRule"/>
</dbReference>
<dbReference type="CDD" id="cd00830">
    <property type="entry name" value="KAS_III"/>
    <property type="match status" value="1"/>
</dbReference>
<dbReference type="Gene3D" id="3.40.47.10">
    <property type="match status" value="1"/>
</dbReference>
<dbReference type="HAMAP" id="MF_01815">
    <property type="entry name" value="FabH"/>
    <property type="match status" value="1"/>
</dbReference>
<dbReference type="InterPro" id="IPR013747">
    <property type="entry name" value="ACP_syn_III_C"/>
</dbReference>
<dbReference type="InterPro" id="IPR013751">
    <property type="entry name" value="ACP_syn_III_N"/>
</dbReference>
<dbReference type="InterPro" id="IPR004655">
    <property type="entry name" value="FabH"/>
</dbReference>
<dbReference type="InterPro" id="IPR016039">
    <property type="entry name" value="Thiolase-like"/>
</dbReference>
<dbReference type="NCBIfam" id="TIGR00747">
    <property type="entry name" value="fabH"/>
    <property type="match status" value="1"/>
</dbReference>
<dbReference type="NCBIfam" id="NF006829">
    <property type="entry name" value="PRK09352.1"/>
    <property type="match status" value="1"/>
</dbReference>
<dbReference type="PANTHER" id="PTHR43091">
    <property type="entry name" value="3-OXOACYL-[ACYL-CARRIER-PROTEIN] SYNTHASE"/>
    <property type="match status" value="1"/>
</dbReference>
<dbReference type="PANTHER" id="PTHR43091:SF1">
    <property type="entry name" value="BETA-KETOACYL-[ACYL-CARRIER-PROTEIN] SYNTHASE III, CHLOROPLASTIC"/>
    <property type="match status" value="1"/>
</dbReference>
<dbReference type="Pfam" id="PF08545">
    <property type="entry name" value="ACP_syn_III"/>
    <property type="match status" value="1"/>
</dbReference>
<dbReference type="Pfam" id="PF08541">
    <property type="entry name" value="ACP_syn_III_C"/>
    <property type="match status" value="1"/>
</dbReference>
<dbReference type="SUPFAM" id="SSF53901">
    <property type="entry name" value="Thiolase-like"/>
    <property type="match status" value="1"/>
</dbReference>
<protein>
    <recommendedName>
        <fullName evidence="1">Beta-ketoacyl-[acyl-carrier-protein] synthase III</fullName>
        <shortName evidence="1">Beta-ketoacyl-ACP synthase III</shortName>
        <shortName evidence="1">KAS III</shortName>
        <ecNumber evidence="1">2.3.1.180</ecNumber>
    </recommendedName>
    <alternativeName>
        <fullName evidence="1">3-oxoacyl-[acyl-carrier-protein] synthase 3</fullName>
    </alternativeName>
    <alternativeName>
        <fullName evidence="1">3-oxoacyl-[acyl-carrier-protein] synthase III</fullName>
    </alternativeName>
</protein>
<gene>
    <name evidence="1" type="primary">fabH</name>
    <name type="ordered locus">SpyM50351</name>
</gene>